<name>YBII_ECOLI</name>
<reference key="1">
    <citation type="journal article" date="1994" name="Jpn. J. Genet.">
        <title>Structural analysis of the rhlE gene of Escherichia coli.</title>
        <authorList>
            <person name="Ohmori H."/>
        </authorList>
    </citation>
    <scope>NUCLEOTIDE SEQUENCE [GENOMIC DNA]</scope>
    <source>
        <strain>K12 / W3110 / ATCC 27325 / DSM 5911</strain>
    </source>
</reference>
<reference key="2">
    <citation type="journal article" date="1996" name="DNA Res.">
        <title>A 718-kb DNA sequence of the Escherichia coli K-12 genome corresponding to the 12.7-28.0 min region on the linkage map.</title>
        <authorList>
            <person name="Oshima T."/>
            <person name="Aiba H."/>
            <person name="Baba T."/>
            <person name="Fujita K."/>
            <person name="Hayashi K."/>
            <person name="Honjo A."/>
            <person name="Ikemoto K."/>
            <person name="Inada T."/>
            <person name="Itoh T."/>
            <person name="Kajihara M."/>
            <person name="Kanai K."/>
            <person name="Kashimoto K."/>
            <person name="Kimura S."/>
            <person name="Kitagawa M."/>
            <person name="Makino K."/>
            <person name="Masuda S."/>
            <person name="Miki T."/>
            <person name="Mizobuchi K."/>
            <person name="Mori H."/>
            <person name="Motomura K."/>
            <person name="Nakamura Y."/>
            <person name="Nashimoto H."/>
            <person name="Nishio Y."/>
            <person name="Saito N."/>
            <person name="Sampei G."/>
            <person name="Seki Y."/>
            <person name="Tagami H."/>
            <person name="Takemoto K."/>
            <person name="Wada C."/>
            <person name="Yamamoto Y."/>
            <person name="Yano M."/>
            <person name="Horiuchi T."/>
        </authorList>
    </citation>
    <scope>NUCLEOTIDE SEQUENCE [LARGE SCALE GENOMIC DNA]</scope>
    <source>
        <strain>K12 / W3110 / ATCC 27325 / DSM 5911</strain>
    </source>
</reference>
<reference key="3">
    <citation type="journal article" date="1997" name="Science">
        <title>The complete genome sequence of Escherichia coli K-12.</title>
        <authorList>
            <person name="Blattner F.R."/>
            <person name="Plunkett G. III"/>
            <person name="Bloch C.A."/>
            <person name="Perna N.T."/>
            <person name="Burland V."/>
            <person name="Riley M."/>
            <person name="Collado-Vides J."/>
            <person name="Glasner J.D."/>
            <person name="Rode C.K."/>
            <person name="Mayhew G.F."/>
            <person name="Gregor J."/>
            <person name="Davis N.W."/>
            <person name="Kirkpatrick H.A."/>
            <person name="Goeden M.A."/>
            <person name="Rose D.J."/>
            <person name="Mau B."/>
            <person name="Shao Y."/>
        </authorList>
    </citation>
    <scope>NUCLEOTIDE SEQUENCE [LARGE SCALE GENOMIC DNA]</scope>
    <source>
        <strain>K12 / MG1655 / ATCC 47076</strain>
    </source>
</reference>
<reference key="4">
    <citation type="journal article" date="2006" name="Mol. Syst. Biol.">
        <title>Highly accurate genome sequences of Escherichia coli K-12 strains MG1655 and W3110.</title>
        <authorList>
            <person name="Hayashi K."/>
            <person name="Morooka N."/>
            <person name="Yamamoto Y."/>
            <person name="Fujita K."/>
            <person name="Isono K."/>
            <person name="Choi S."/>
            <person name="Ohtsubo E."/>
            <person name="Baba T."/>
            <person name="Wanner B.L."/>
            <person name="Mori H."/>
            <person name="Horiuchi T."/>
        </authorList>
    </citation>
    <scope>NUCLEOTIDE SEQUENCE [LARGE SCALE GENOMIC DNA]</scope>
    <source>
        <strain>K12 / W3110 / ATCC 27325 / DSM 5911</strain>
    </source>
</reference>
<gene>
    <name type="primary">ybiI</name>
    <name type="ordered locus">b0803</name>
    <name type="ordered locus">JW0788</name>
</gene>
<accession>P41039</accession>
<evidence type="ECO:0000255" key="1">
    <source>
        <dbReference type="PROSITE-ProRule" id="PRU00510"/>
    </source>
</evidence>
<evidence type="ECO:0007829" key="2">
    <source>
        <dbReference type="PDB" id="2KGO"/>
    </source>
</evidence>
<keyword id="KW-0002">3D-structure</keyword>
<keyword id="KW-0479">Metal-binding</keyword>
<keyword id="KW-1185">Reference proteome</keyword>
<keyword id="KW-0862">Zinc</keyword>
<keyword id="KW-0863">Zinc-finger</keyword>
<sequence length="88" mass="9756">MASGWANDDAVNEQINSTIEDAIARARGEIPRGESLDECEECGAPIPQARREAIPGVRLCIHCQQEKDLQKPAYTGYNRRGSKDSQLR</sequence>
<organism>
    <name type="scientific">Escherichia coli (strain K12)</name>
    <dbReference type="NCBI Taxonomy" id="83333"/>
    <lineage>
        <taxon>Bacteria</taxon>
        <taxon>Pseudomonadati</taxon>
        <taxon>Pseudomonadota</taxon>
        <taxon>Gammaproteobacteria</taxon>
        <taxon>Enterobacterales</taxon>
        <taxon>Enterobacteriaceae</taxon>
        <taxon>Escherichia</taxon>
    </lineage>
</organism>
<proteinExistence type="evidence at protein level"/>
<protein>
    <recommendedName>
        <fullName>Uncharacterized protein YbiI</fullName>
    </recommendedName>
</protein>
<feature type="chain" id="PRO_0000187551" description="Uncharacterized protein YbiI">
    <location>
        <begin position="1"/>
        <end position="88"/>
    </location>
</feature>
<feature type="zinc finger region" description="dksA C4-type" evidence="1">
    <location>
        <begin position="39"/>
        <end position="63"/>
    </location>
</feature>
<feature type="strand" evidence="2">
    <location>
        <begin position="3"/>
        <end position="6"/>
    </location>
</feature>
<feature type="helix" evidence="2">
    <location>
        <begin position="9"/>
        <end position="15"/>
    </location>
</feature>
<feature type="helix" evidence="2">
    <location>
        <begin position="18"/>
        <end position="26"/>
    </location>
</feature>
<feature type="strand" evidence="2">
    <location>
        <begin position="32"/>
        <end position="34"/>
    </location>
</feature>
<feature type="turn" evidence="2">
    <location>
        <begin position="40"/>
        <end position="42"/>
    </location>
</feature>
<feature type="helix" evidence="2">
    <location>
        <begin position="48"/>
        <end position="53"/>
    </location>
</feature>
<feature type="helix" evidence="2">
    <location>
        <begin position="61"/>
        <end position="70"/>
    </location>
</feature>
<dbReference type="EMBL" id="L02123">
    <property type="status" value="NOT_ANNOTATED_CDS"/>
    <property type="molecule type" value="Genomic_DNA"/>
</dbReference>
<dbReference type="EMBL" id="U00096">
    <property type="protein sequence ID" value="AAC73890.1"/>
    <property type="molecule type" value="Genomic_DNA"/>
</dbReference>
<dbReference type="EMBL" id="AP009048">
    <property type="protein sequence ID" value="BAA35469.1"/>
    <property type="molecule type" value="Genomic_DNA"/>
</dbReference>
<dbReference type="PIR" id="C64817">
    <property type="entry name" value="C64817"/>
</dbReference>
<dbReference type="RefSeq" id="NP_415324.1">
    <property type="nucleotide sequence ID" value="NC_000913.3"/>
</dbReference>
<dbReference type="RefSeq" id="WP_000146343.1">
    <property type="nucleotide sequence ID" value="NZ_STEB01000019.1"/>
</dbReference>
<dbReference type="PDB" id="2KGO">
    <property type="method" value="NMR"/>
    <property type="chains" value="A=1-88"/>
</dbReference>
<dbReference type="PDBsum" id="2KGO"/>
<dbReference type="BMRB" id="P41039"/>
<dbReference type="SMR" id="P41039"/>
<dbReference type="BioGRID" id="4259954">
    <property type="interactions" value="119"/>
</dbReference>
<dbReference type="FunCoup" id="P41039">
    <property type="interactions" value="101"/>
</dbReference>
<dbReference type="IntAct" id="P41039">
    <property type="interactions" value="13"/>
</dbReference>
<dbReference type="STRING" id="511145.b0803"/>
<dbReference type="jPOST" id="P41039"/>
<dbReference type="PaxDb" id="511145-b0803"/>
<dbReference type="EnsemblBacteria" id="AAC73890">
    <property type="protein sequence ID" value="AAC73890"/>
    <property type="gene ID" value="b0803"/>
</dbReference>
<dbReference type="GeneID" id="93776627"/>
<dbReference type="GeneID" id="945434"/>
<dbReference type="KEGG" id="ecj:JW0788"/>
<dbReference type="KEGG" id="eco:b0803"/>
<dbReference type="KEGG" id="ecoc:C3026_05065"/>
<dbReference type="PATRIC" id="fig|1411691.4.peg.1475"/>
<dbReference type="EchoBASE" id="EB2320"/>
<dbReference type="eggNOG" id="COG1734">
    <property type="taxonomic scope" value="Bacteria"/>
</dbReference>
<dbReference type="HOGENOM" id="CLU_158637_0_1_6"/>
<dbReference type="InParanoid" id="P41039"/>
<dbReference type="OMA" id="MAGGWAR"/>
<dbReference type="OrthoDB" id="962301at2"/>
<dbReference type="PhylomeDB" id="P41039"/>
<dbReference type="BioCyc" id="EcoCyc:EG12421-MONOMER"/>
<dbReference type="EvolutionaryTrace" id="P41039"/>
<dbReference type="PRO" id="PR:P41039"/>
<dbReference type="Proteomes" id="UP000000625">
    <property type="component" value="Chromosome"/>
</dbReference>
<dbReference type="GO" id="GO:0008270">
    <property type="term" value="F:zinc ion binding"/>
    <property type="evidence" value="ECO:0007669"/>
    <property type="project" value="UniProtKB-KW"/>
</dbReference>
<dbReference type="GO" id="GO:1900378">
    <property type="term" value="P:positive regulation of secondary metabolite biosynthetic process"/>
    <property type="evidence" value="ECO:0000318"/>
    <property type="project" value="GO_Central"/>
</dbReference>
<dbReference type="FunFam" id="1.20.120.910:FF:000002">
    <property type="entry name" value="DksA/TraR family C4-type zinc finger protein"/>
    <property type="match status" value="1"/>
</dbReference>
<dbReference type="Gene3D" id="1.20.120.910">
    <property type="entry name" value="DksA, coiled-coil domain"/>
    <property type="match status" value="1"/>
</dbReference>
<dbReference type="InterPro" id="IPR020460">
    <property type="entry name" value="Znf_C4-type_bac"/>
</dbReference>
<dbReference type="InterPro" id="IPR000962">
    <property type="entry name" value="Znf_DskA_TraR"/>
</dbReference>
<dbReference type="InterPro" id="IPR020458">
    <property type="entry name" value="Znf_DskA_TraR_CS"/>
</dbReference>
<dbReference type="NCBIfam" id="NF008243">
    <property type="entry name" value="PRK11019.1"/>
    <property type="match status" value="1"/>
</dbReference>
<dbReference type="PANTHER" id="PTHR38777:SF1">
    <property type="entry name" value="DNAK SUPPRESSOR PROTEIN"/>
    <property type="match status" value="1"/>
</dbReference>
<dbReference type="PANTHER" id="PTHR38777">
    <property type="entry name" value="FELS-2 PROPHAGE PROTEIN"/>
    <property type="match status" value="1"/>
</dbReference>
<dbReference type="Pfam" id="PF01258">
    <property type="entry name" value="zf-dskA_traR"/>
    <property type="match status" value="1"/>
</dbReference>
<dbReference type="PRINTS" id="PR00618">
    <property type="entry name" value="DKSAZNFINGER"/>
</dbReference>
<dbReference type="SUPFAM" id="SSF57716">
    <property type="entry name" value="Glucocorticoid receptor-like (DNA-binding domain)"/>
    <property type="match status" value="1"/>
</dbReference>
<dbReference type="PROSITE" id="PS01102">
    <property type="entry name" value="ZF_DKSA_1"/>
    <property type="match status" value="1"/>
</dbReference>
<dbReference type="PROSITE" id="PS51128">
    <property type="entry name" value="ZF_DKSA_2"/>
    <property type="match status" value="1"/>
</dbReference>